<evidence type="ECO:0000255" key="1">
    <source>
        <dbReference type="HAMAP-Rule" id="MF_00612"/>
    </source>
</evidence>
<dbReference type="EMBL" id="CP000266">
    <property type="protein sequence ID" value="ABF03451.1"/>
    <property type="molecule type" value="Genomic_DNA"/>
</dbReference>
<dbReference type="RefSeq" id="WP_005105319.1">
    <property type="nucleotide sequence ID" value="NC_008258.1"/>
</dbReference>
<dbReference type="SMR" id="Q0T5G4"/>
<dbReference type="KEGG" id="sfv:SFV_1246"/>
<dbReference type="HOGENOM" id="CLU_099590_0_0_6"/>
<dbReference type="Proteomes" id="UP000000659">
    <property type="component" value="Chromosome"/>
</dbReference>
<dbReference type="Gene3D" id="3.10.450.50">
    <property type="match status" value="1"/>
</dbReference>
<dbReference type="HAMAP" id="MF_00612">
    <property type="entry name" value="UPF0225"/>
    <property type="match status" value="1"/>
</dbReference>
<dbReference type="InterPro" id="IPR032710">
    <property type="entry name" value="NTF2-like_dom_sf"/>
</dbReference>
<dbReference type="InterPro" id="IPR004027">
    <property type="entry name" value="SEC_C_motif"/>
</dbReference>
<dbReference type="InterPro" id="IPR023006">
    <property type="entry name" value="UPF0225"/>
</dbReference>
<dbReference type="InterPro" id="IPR048469">
    <property type="entry name" value="YchJ-like_M"/>
</dbReference>
<dbReference type="NCBIfam" id="NF002449">
    <property type="entry name" value="PRK01617.1"/>
    <property type="match status" value="1"/>
</dbReference>
<dbReference type="NCBIfam" id="NF002486">
    <property type="entry name" value="PRK01752.1"/>
    <property type="match status" value="1"/>
</dbReference>
<dbReference type="PANTHER" id="PTHR33747:SF1">
    <property type="entry name" value="ADENYLATE CYCLASE-ASSOCIATED CAP C-TERMINAL DOMAIN-CONTAINING PROTEIN"/>
    <property type="match status" value="1"/>
</dbReference>
<dbReference type="PANTHER" id="PTHR33747">
    <property type="entry name" value="UPF0225 PROTEIN SCO1677"/>
    <property type="match status" value="1"/>
</dbReference>
<dbReference type="Pfam" id="PF02810">
    <property type="entry name" value="SEC-C"/>
    <property type="match status" value="2"/>
</dbReference>
<dbReference type="Pfam" id="PF17775">
    <property type="entry name" value="YchJ_M-like"/>
    <property type="match status" value="1"/>
</dbReference>
<dbReference type="SUPFAM" id="SSF54427">
    <property type="entry name" value="NTF2-like"/>
    <property type="match status" value="1"/>
</dbReference>
<dbReference type="SUPFAM" id="SSF103642">
    <property type="entry name" value="Sec-C motif"/>
    <property type="match status" value="1"/>
</dbReference>
<accession>Q0T5G4</accession>
<name>YCHJ_SHIF8</name>
<feature type="chain" id="PRO_1000056743" description="UPF0225 protein YchJ">
    <location>
        <begin position="1"/>
        <end position="152"/>
    </location>
</feature>
<organism>
    <name type="scientific">Shigella flexneri serotype 5b (strain 8401)</name>
    <dbReference type="NCBI Taxonomy" id="373384"/>
    <lineage>
        <taxon>Bacteria</taxon>
        <taxon>Pseudomonadati</taxon>
        <taxon>Pseudomonadota</taxon>
        <taxon>Gammaproteobacteria</taxon>
        <taxon>Enterobacterales</taxon>
        <taxon>Enterobacteriaceae</taxon>
        <taxon>Shigella</taxon>
    </lineage>
</organism>
<proteinExistence type="inferred from homology"/>
<reference key="1">
    <citation type="journal article" date="2006" name="BMC Genomics">
        <title>Complete genome sequence of Shigella flexneri 5b and comparison with Shigella flexneri 2a.</title>
        <authorList>
            <person name="Nie H."/>
            <person name="Yang F."/>
            <person name="Zhang X."/>
            <person name="Yang J."/>
            <person name="Chen L."/>
            <person name="Wang J."/>
            <person name="Xiong Z."/>
            <person name="Peng J."/>
            <person name="Sun L."/>
            <person name="Dong J."/>
            <person name="Xue Y."/>
            <person name="Xu X."/>
            <person name="Chen S."/>
            <person name="Yao Z."/>
            <person name="Shen Y."/>
            <person name="Jin Q."/>
        </authorList>
    </citation>
    <scope>NUCLEOTIDE SEQUENCE [LARGE SCALE GENOMIC DNA]</scope>
    <source>
        <strain>8401</strain>
    </source>
</reference>
<sequence>MSQLCPCGSAVEYSLCCHPYVSGEKVAPDPEHLMRSRYCAFVMQDADYLIKTWHPSCGAAALRAELMTGFAHTEWLGLTVFEHCWQDADNIGFVSFVARFTEGGKTGAIIERSRFLKENGQWYYIDGTRPQFGRNDPCPCGSGKKFKKCCGQ</sequence>
<comment type="similarity">
    <text evidence="1">Belongs to the UPF0225 family.</text>
</comment>
<gene>
    <name evidence="1" type="primary">ychJ</name>
    <name type="ordered locus">SFV_1246</name>
</gene>
<protein>
    <recommendedName>
        <fullName evidence="1">UPF0225 protein YchJ</fullName>
    </recommendedName>
</protein>